<protein>
    <recommendedName>
        <fullName>Putative S-adenosyl-L-methionine-dependent methyltransferase MRA_3805</fullName>
        <ecNumber>2.1.1.-</ecNumber>
    </recommendedName>
</protein>
<organism>
    <name type="scientific">Mycobacterium tuberculosis (strain ATCC 25177 / H37Ra)</name>
    <dbReference type="NCBI Taxonomy" id="419947"/>
    <lineage>
        <taxon>Bacteria</taxon>
        <taxon>Bacillati</taxon>
        <taxon>Actinomycetota</taxon>
        <taxon>Actinomycetes</taxon>
        <taxon>Mycobacteriales</taxon>
        <taxon>Mycobacteriaceae</taxon>
        <taxon>Mycobacterium</taxon>
        <taxon>Mycobacterium tuberculosis complex</taxon>
    </lineage>
</organism>
<dbReference type="EC" id="2.1.1.-"/>
<dbReference type="EMBL" id="CP000611">
    <property type="protein sequence ID" value="ABQ75594.1"/>
    <property type="molecule type" value="Genomic_DNA"/>
</dbReference>
<dbReference type="RefSeq" id="WP_003420557.1">
    <property type="nucleotide sequence ID" value="NZ_CP016972.1"/>
</dbReference>
<dbReference type="SMR" id="A5U994"/>
<dbReference type="KEGG" id="mra:MRA_3805"/>
<dbReference type="eggNOG" id="COG3315">
    <property type="taxonomic scope" value="Bacteria"/>
</dbReference>
<dbReference type="HOGENOM" id="CLU_056160_2_1_11"/>
<dbReference type="Proteomes" id="UP000001988">
    <property type="component" value="Chromosome"/>
</dbReference>
<dbReference type="GO" id="GO:0008168">
    <property type="term" value="F:methyltransferase activity"/>
    <property type="evidence" value="ECO:0007669"/>
    <property type="project" value="UniProtKB-KW"/>
</dbReference>
<dbReference type="GO" id="GO:0032259">
    <property type="term" value="P:methylation"/>
    <property type="evidence" value="ECO:0007669"/>
    <property type="project" value="UniProtKB-KW"/>
</dbReference>
<dbReference type="FunFam" id="3.40.50.150:FF:000152">
    <property type="entry name" value="S-adenosyl-L-methionine-dependent methyltransferase"/>
    <property type="match status" value="1"/>
</dbReference>
<dbReference type="Gene3D" id="3.40.50.150">
    <property type="entry name" value="Vaccinia Virus protein VP39"/>
    <property type="match status" value="1"/>
</dbReference>
<dbReference type="InterPro" id="IPR007213">
    <property type="entry name" value="Ppm1/Ppm2/Tcmp"/>
</dbReference>
<dbReference type="InterPro" id="IPR029063">
    <property type="entry name" value="SAM-dependent_MTases_sf"/>
</dbReference>
<dbReference type="InterPro" id="IPR011610">
    <property type="entry name" value="SAM_mthyl_Trfase_ML2640-like"/>
</dbReference>
<dbReference type="NCBIfam" id="TIGR00027">
    <property type="entry name" value="mthyl_TIGR00027"/>
    <property type="match status" value="1"/>
</dbReference>
<dbReference type="PANTHER" id="PTHR43619">
    <property type="entry name" value="S-ADENOSYL-L-METHIONINE-DEPENDENT METHYLTRANSFERASE YKTD-RELATED"/>
    <property type="match status" value="1"/>
</dbReference>
<dbReference type="PANTHER" id="PTHR43619:SF2">
    <property type="entry name" value="S-ADENOSYL-L-METHIONINE-DEPENDENT METHYLTRANSFERASES SUPERFAMILY PROTEIN"/>
    <property type="match status" value="1"/>
</dbReference>
<dbReference type="Pfam" id="PF04072">
    <property type="entry name" value="LCM"/>
    <property type="match status" value="1"/>
</dbReference>
<dbReference type="SUPFAM" id="SSF53335">
    <property type="entry name" value="S-adenosyl-L-methionine-dependent methyltransferases"/>
    <property type="match status" value="1"/>
</dbReference>
<comment type="function">
    <text evidence="1">Exhibits S-adenosyl-L-methionine-dependent methyltransferase activity.</text>
</comment>
<comment type="similarity">
    <text evidence="2">Belongs to the UPF0677 family.</text>
</comment>
<proteinExistence type="inferred from homology"/>
<reference key="1">
    <citation type="journal article" date="2008" name="PLoS ONE">
        <title>Genetic basis of virulence attenuation revealed by comparative genomic analysis of Mycobacterium tuberculosis strain H37Ra versus H37Rv.</title>
        <authorList>
            <person name="Zheng H."/>
            <person name="Lu L."/>
            <person name="Wang B."/>
            <person name="Pu S."/>
            <person name="Zhang X."/>
            <person name="Zhu G."/>
            <person name="Shi W."/>
            <person name="Zhang L."/>
            <person name="Wang H."/>
            <person name="Wang S."/>
            <person name="Zhao G."/>
            <person name="Zhang Y."/>
        </authorList>
    </citation>
    <scope>NUCLEOTIDE SEQUENCE [LARGE SCALE GENOMIC DNA]</scope>
    <source>
        <strain>ATCC 25177 / H37Ra</strain>
    </source>
</reference>
<keyword id="KW-0489">Methyltransferase</keyword>
<keyword id="KW-1185">Reference proteome</keyword>
<keyword id="KW-0949">S-adenosyl-L-methionine</keyword>
<keyword id="KW-0808">Transferase</keyword>
<gene>
    <name type="ordered locus">MRA_3805</name>
</gene>
<sequence>MPRTDNDSWAITESVGATALGVAAARAAETESDNPLINDPFARIFVDAAGDGIWSMYTNRTLLAGATDLDPDLRAPIQQMIDFMAARTAFFDEYFLATADAGVRQVVILASGLDSRAWRLPWPDGTVVYELDQPKVLEFKSATLRQHGAQPASQLVNVPIDLRQDWPKALQKAGFDPSKPCAWLAEGLVRYLPARAQDLLFERIDALSRPGSWLASNVPGAGFLDPERMRRQRADMRRMRAAAAKLVETEISDVDDLWYAEQRTAVAEWLRERGWDVSTATLPELLARYGRSIPHSGEDSIPPNLFVSAQRATS</sequence>
<accession>A5U994</accession>
<feature type="chain" id="PRO_0000361228" description="Putative S-adenosyl-L-methionine-dependent methyltransferase MRA_3805">
    <location>
        <begin position="1"/>
        <end position="314"/>
    </location>
</feature>
<feature type="binding site" evidence="1">
    <location>
        <position position="132"/>
    </location>
    <ligand>
        <name>S-adenosyl-L-methionine</name>
        <dbReference type="ChEBI" id="CHEBI:59789"/>
    </ligand>
</feature>
<feature type="binding site" evidence="1">
    <location>
        <begin position="161"/>
        <end position="162"/>
    </location>
    <ligand>
        <name>S-adenosyl-L-methionine</name>
        <dbReference type="ChEBI" id="CHEBI:59789"/>
    </ligand>
</feature>
<name>Y3805_MYCTA</name>
<evidence type="ECO:0000250" key="1"/>
<evidence type="ECO:0000305" key="2"/>